<gene>
    <name evidence="1" type="primary">TIF34</name>
    <name type="ORF">PICST_90188</name>
</gene>
<organism>
    <name type="scientific">Scheffersomyces stipitis (strain ATCC 58785 / CBS 6054 / NBRC 10063 / NRRL Y-11545)</name>
    <name type="common">Yeast</name>
    <name type="synonym">Pichia stipitis</name>
    <dbReference type="NCBI Taxonomy" id="322104"/>
    <lineage>
        <taxon>Eukaryota</taxon>
        <taxon>Fungi</taxon>
        <taxon>Dikarya</taxon>
        <taxon>Ascomycota</taxon>
        <taxon>Saccharomycotina</taxon>
        <taxon>Pichiomycetes</taxon>
        <taxon>Debaryomycetaceae</taxon>
        <taxon>Scheffersomyces</taxon>
    </lineage>
</organism>
<sequence>MRPIKLMGHERSLTQVKYNREGDLLFSVAKDNAASIWYSSNGERLGTLEGHQGVIWSIDVDPDTHLCATGGGDLAIKLWKVETGKCVFTWESPSPVRRVAFSPDGSRLLAIADQVMGHIGTIVVYEINHDDESLTNQSTEPSLVIETPQDGAKATVAGWSANGEFIISGHDDGYIYKYDAQTGEAVNSLEAHGIHTEEKNVTVTDIQFAAEDRSYFITSSKDKCSTLIDVDTFEILKVYKADAPMNTAAITPLKDFVILGGGQEARNVTTTAESQGKFEARFYHKVFEDEIGRVKGHFGPLNTVAVHPDGTGYSSGGEDGFIRVHTFDKSYFDFYVDAAEKNTEKSAEKA</sequence>
<keyword id="KW-0963">Cytoplasm</keyword>
<keyword id="KW-0396">Initiation factor</keyword>
<keyword id="KW-0648">Protein biosynthesis</keyword>
<keyword id="KW-1185">Reference proteome</keyword>
<keyword id="KW-0677">Repeat</keyword>
<keyword id="KW-0853">WD repeat</keyword>
<accession>A3LX18</accession>
<comment type="function">
    <text evidence="1">Component of the eukaryotic translation initiation factor 3 (eIF-3) complex, which is involved in protein synthesis of a specialized repertoire of mRNAs and, together with other initiation factors, stimulates binding of mRNA and methionyl-tRNAi to the 40S ribosome. The eIF-3 complex specifically targets and initiates translation of a subset of mRNAs involved in cell proliferation.</text>
</comment>
<comment type="subunit">
    <text evidence="1">Component of the eukaryotic translation initiation factor 3 (eIF-3) complex.</text>
</comment>
<comment type="subcellular location">
    <subcellularLocation>
        <location evidence="1">Cytoplasm</location>
    </subcellularLocation>
</comment>
<comment type="similarity">
    <text evidence="1">Belongs to the eIF-3 subunit I family.</text>
</comment>
<feature type="chain" id="PRO_0000366902" description="Eukaryotic translation initiation factor 3 subunit I">
    <location>
        <begin position="1"/>
        <end position="350"/>
    </location>
</feature>
<feature type="repeat" description="WD 1">
    <location>
        <begin position="8"/>
        <end position="49"/>
    </location>
</feature>
<feature type="repeat" description="WD 2">
    <location>
        <begin position="51"/>
        <end position="89"/>
    </location>
</feature>
<feature type="repeat" description="WD 3">
    <location>
        <begin position="91"/>
        <end position="135"/>
    </location>
</feature>
<feature type="repeat" description="WD 4">
    <location>
        <begin position="149"/>
        <end position="188"/>
    </location>
</feature>
<feature type="repeat" description="WD 5">
    <location>
        <begin position="198"/>
        <end position="240"/>
    </location>
</feature>
<feature type="repeat" description="WD 6">
    <location>
        <begin position="296"/>
        <end position="335"/>
    </location>
</feature>
<proteinExistence type="inferred from homology"/>
<dbReference type="EMBL" id="CP000500">
    <property type="protein sequence ID" value="ABN67385.1"/>
    <property type="molecule type" value="Genomic_DNA"/>
</dbReference>
<dbReference type="RefSeq" id="XP_001385414.1">
    <property type="nucleotide sequence ID" value="XM_001385377.1"/>
</dbReference>
<dbReference type="SMR" id="A3LX18"/>
<dbReference type="FunCoup" id="A3LX18">
    <property type="interactions" value="1143"/>
</dbReference>
<dbReference type="STRING" id="322104.A3LX18"/>
<dbReference type="GeneID" id="4840077"/>
<dbReference type="KEGG" id="pic:PICST_90188"/>
<dbReference type="eggNOG" id="KOG0643">
    <property type="taxonomic scope" value="Eukaryota"/>
</dbReference>
<dbReference type="HOGENOM" id="CLU_043845_0_1_1"/>
<dbReference type="InParanoid" id="A3LX18"/>
<dbReference type="OMA" id="VWFSHNG"/>
<dbReference type="OrthoDB" id="24966at2759"/>
<dbReference type="Proteomes" id="UP000002258">
    <property type="component" value="Chromosome 6"/>
</dbReference>
<dbReference type="GO" id="GO:0016282">
    <property type="term" value="C:eukaryotic 43S preinitiation complex"/>
    <property type="evidence" value="ECO:0007669"/>
    <property type="project" value="UniProtKB-UniRule"/>
</dbReference>
<dbReference type="GO" id="GO:0033290">
    <property type="term" value="C:eukaryotic 48S preinitiation complex"/>
    <property type="evidence" value="ECO:0007669"/>
    <property type="project" value="UniProtKB-UniRule"/>
</dbReference>
<dbReference type="GO" id="GO:0071540">
    <property type="term" value="C:eukaryotic translation initiation factor 3 complex, eIF3e"/>
    <property type="evidence" value="ECO:0007669"/>
    <property type="project" value="EnsemblFungi"/>
</dbReference>
<dbReference type="GO" id="GO:0071541">
    <property type="term" value="C:eukaryotic translation initiation factor 3 complex, eIF3m"/>
    <property type="evidence" value="ECO:0007669"/>
    <property type="project" value="EnsemblFungi"/>
</dbReference>
<dbReference type="GO" id="GO:0034399">
    <property type="term" value="C:nuclear periphery"/>
    <property type="evidence" value="ECO:0007669"/>
    <property type="project" value="EnsemblFungi"/>
</dbReference>
<dbReference type="GO" id="GO:0003723">
    <property type="term" value="F:RNA binding"/>
    <property type="evidence" value="ECO:0007669"/>
    <property type="project" value="TreeGrafter"/>
</dbReference>
<dbReference type="GO" id="GO:0003743">
    <property type="term" value="F:translation initiation factor activity"/>
    <property type="evidence" value="ECO:0007669"/>
    <property type="project" value="UniProtKB-UniRule"/>
</dbReference>
<dbReference type="GO" id="GO:0001732">
    <property type="term" value="P:formation of cytoplasmic translation initiation complex"/>
    <property type="evidence" value="ECO:0007669"/>
    <property type="project" value="UniProtKB-UniRule"/>
</dbReference>
<dbReference type="FunFam" id="2.130.10.10:FF:000127">
    <property type="entry name" value="Eukaryotic translation initiation factor 3 subunit I"/>
    <property type="match status" value="1"/>
</dbReference>
<dbReference type="Gene3D" id="2.130.10.10">
    <property type="entry name" value="YVTN repeat-like/Quinoprotein amine dehydrogenase"/>
    <property type="match status" value="1"/>
</dbReference>
<dbReference type="HAMAP" id="MF_03008">
    <property type="entry name" value="eIF3i"/>
    <property type="match status" value="1"/>
</dbReference>
<dbReference type="InterPro" id="IPR027525">
    <property type="entry name" value="eIF3i"/>
</dbReference>
<dbReference type="InterPro" id="IPR015943">
    <property type="entry name" value="WD40/YVTN_repeat-like_dom_sf"/>
</dbReference>
<dbReference type="InterPro" id="IPR036322">
    <property type="entry name" value="WD40_repeat_dom_sf"/>
</dbReference>
<dbReference type="InterPro" id="IPR001680">
    <property type="entry name" value="WD40_rpt"/>
</dbReference>
<dbReference type="PANTHER" id="PTHR19877">
    <property type="entry name" value="EUKARYOTIC TRANSLATION INITIATION FACTOR 3 SUBUNIT I"/>
    <property type="match status" value="1"/>
</dbReference>
<dbReference type="PANTHER" id="PTHR19877:SF1">
    <property type="entry name" value="EUKARYOTIC TRANSLATION INITIATION FACTOR 3 SUBUNIT I"/>
    <property type="match status" value="1"/>
</dbReference>
<dbReference type="Pfam" id="PF24805">
    <property type="entry name" value="EIF3I"/>
    <property type="match status" value="1"/>
</dbReference>
<dbReference type="SMART" id="SM00320">
    <property type="entry name" value="WD40"/>
    <property type="match status" value="6"/>
</dbReference>
<dbReference type="SUPFAM" id="SSF50978">
    <property type="entry name" value="WD40 repeat-like"/>
    <property type="match status" value="1"/>
</dbReference>
<dbReference type="PROSITE" id="PS50082">
    <property type="entry name" value="WD_REPEATS_2"/>
    <property type="match status" value="3"/>
</dbReference>
<dbReference type="PROSITE" id="PS50294">
    <property type="entry name" value="WD_REPEATS_REGION"/>
    <property type="match status" value="1"/>
</dbReference>
<evidence type="ECO:0000255" key="1">
    <source>
        <dbReference type="HAMAP-Rule" id="MF_03008"/>
    </source>
</evidence>
<name>EIF3I_PICST</name>
<protein>
    <recommendedName>
        <fullName evidence="1">Eukaryotic translation initiation factor 3 subunit I</fullName>
        <shortName evidence="1">eIF3i</shortName>
    </recommendedName>
    <alternativeName>
        <fullName evidence="1">Eukaryotic translation initiation factor 3 39 kDa subunit homolog</fullName>
        <shortName evidence="1">eIF-3 39 kDa subunit homolog</shortName>
    </alternativeName>
</protein>
<reference key="1">
    <citation type="journal article" date="2007" name="Nat. Biotechnol.">
        <title>Genome sequence of the lignocellulose-bioconverting and xylose-fermenting yeast Pichia stipitis.</title>
        <authorList>
            <person name="Jeffries T.W."/>
            <person name="Grigoriev I.V."/>
            <person name="Grimwood J."/>
            <person name="Laplaza J.M."/>
            <person name="Aerts A."/>
            <person name="Salamov A."/>
            <person name="Schmutz J."/>
            <person name="Lindquist E."/>
            <person name="Dehal P."/>
            <person name="Shapiro H."/>
            <person name="Jin Y.-S."/>
            <person name="Passoth V."/>
            <person name="Richardson P.M."/>
        </authorList>
    </citation>
    <scope>NUCLEOTIDE SEQUENCE [LARGE SCALE GENOMIC DNA]</scope>
    <source>
        <strain>ATCC 58785 / CBS 6054 / NBRC 10063 / NRRL Y-11545</strain>
    </source>
</reference>